<reference key="1">
    <citation type="journal article" date="2008" name="PLoS Genet.">
        <title>Complete genome sequence of the complex carbohydrate-degrading marine bacterium, Saccharophagus degradans strain 2-40 T.</title>
        <authorList>
            <person name="Weiner R.M."/>
            <person name="Taylor L.E. II"/>
            <person name="Henrissat B."/>
            <person name="Hauser L."/>
            <person name="Land M."/>
            <person name="Coutinho P.M."/>
            <person name="Rancurel C."/>
            <person name="Saunders E.H."/>
            <person name="Longmire A.G."/>
            <person name="Zhang H."/>
            <person name="Bayer E.A."/>
            <person name="Gilbert H.J."/>
            <person name="Larimer F."/>
            <person name="Zhulin I.B."/>
            <person name="Ekborg N.A."/>
            <person name="Lamed R."/>
            <person name="Richardson P.M."/>
            <person name="Borovok I."/>
            <person name="Hutcheson S."/>
        </authorList>
    </citation>
    <scope>NUCLEOTIDE SEQUENCE [LARGE SCALE GENOMIC DNA]</scope>
    <source>
        <strain>2-40 / ATCC 43961 / DSM 17024</strain>
    </source>
</reference>
<keyword id="KW-1185">Reference proteome</keyword>
<keyword id="KW-0687">Ribonucleoprotein</keyword>
<keyword id="KW-0689">Ribosomal protein</keyword>
<keyword id="KW-0694">RNA-binding</keyword>
<keyword id="KW-0699">rRNA-binding</keyword>
<name>RS8_SACD2</name>
<accession>Q21M44</accession>
<organism>
    <name type="scientific">Saccharophagus degradans (strain 2-40 / ATCC 43961 / DSM 17024)</name>
    <dbReference type="NCBI Taxonomy" id="203122"/>
    <lineage>
        <taxon>Bacteria</taxon>
        <taxon>Pseudomonadati</taxon>
        <taxon>Pseudomonadota</taxon>
        <taxon>Gammaproteobacteria</taxon>
        <taxon>Cellvibrionales</taxon>
        <taxon>Cellvibrionaceae</taxon>
        <taxon>Saccharophagus</taxon>
    </lineage>
</organism>
<proteinExistence type="inferred from homology"/>
<gene>
    <name evidence="1" type="primary">rpsH</name>
    <name type="ordered locus">Sde_0973</name>
</gene>
<feature type="chain" id="PRO_0000290922" description="Small ribosomal subunit protein uS8">
    <location>
        <begin position="1"/>
        <end position="130"/>
    </location>
</feature>
<comment type="function">
    <text evidence="1">One of the primary rRNA binding proteins, it binds directly to 16S rRNA central domain where it helps coordinate assembly of the platform of the 30S subunit.</text>
</comment>
<comment type="subunit">
    <text evidence="1">Part of the 30S ribosomal subunit. Contacts proteins S5 and S12.</text>
</comment>
<comment type="similarity">
    <text evidence="1">Belongs to the universal ribosomal protein uS8 family.</text>
</comment>
<sequence length="130" mass="13819">MSMQDPIADMLTRIRNAQQVGKTSVTMPSSKLKKSIAGVLKEEGYVGEFSVNDAAKAELTVELKYFEGKPVIAELDRVSRPGLRSYVGKDELPSVRGGLGIAIVSTSKGVMTDRAARAAGVGGEILCTVF</sequence>
<dbReference type="EMBL" id="CP000282">
    <property type="protein sequence ID" value="ABD80235.1"/>
    <property type="molecule type" value="Genomic_DNA"/>
</dbReference>
<dbReference type="RefSeq" id="WP_011467455.1">
    <property type="nucleotide sequence ID" value="NC_007912.1"/>
</dbReference>
<dbReference type="SMR" id="Q21M44"/>
<dbReference type="STRING" id="203122.Sde_0973"/>
<dbReference type="GeneID" id="98612659"/>
<dbReference type="KEGG" id="sde:Sde_0973"/>
<dbReference type="eggNOG" id="COG0096">
    <property type="taxonomic scope" value="Bacteria"/>
</dbReference>
<dbReference type="HOGENOM" id="CLU_098428_0_0_6"/>
<dbReference type="OrthoDB" id="9802617at2"/>
<dbReference type="Proteomes" id="UP000001947">
    <property type="component" value="Chromosome"/>
</dbReference>
<dbReference type="GO" id="GO:1990904">
    <property type="term" value="C:ribonucleoprotein complex"/>
    <property type="evidence" value="ECO:0007669"/>
    <property type="project" value="UniProtKB-KW"/>
</dbReference>
<dbReference type="GO" id="GO:0005840">
    <property type="term" value="C:ribosome"/>
    <property type="evidence" value="ECO:0007669"/>
    <property type="project" value="UniProtKB-KW"/>
</dbReference>
<dbReference type="GO" id="GO:0019843">
    <property type="term" value="F:rRNA binding"/>
    <property type="evidence" value="ECO:0007669"/>
    <property type="project" value="UniProtKB-UniRule"/>
</dbReference>
<dbReference type="GO" id="GO:0003735">
    <property type="term" value="F:structural constituent of ribosome"/>
    <property type="evidence" value="ECO:0007669"/>
    <property type="project" value="InterPro"/>
</dbReference>
<dbReference type="GO" id="GO:0006412">
    <property type="term" value="P:translation"/>
    <property type="evidence" value="ECO:0007669"/>
    <property type="project" value="UniProtKB-UniRule"/>
</dbReference>
<dbReference type="FunFam" id="3.30.1370.30:FF:000002">
    <property type="entry name" value="30S ribosomal protein S8"/>
    <property type="match status" value="1"/>
</dbReference>
<dbReference type="FunFam" id="3.30.1490.10:FF:000001">
    <property type="entry name" value="30S ribosomal protein S8"/>
    <property type="match status" value="1"/>
</dbReference>
<dbReference type="Gene3D" id="3.30.1370.30">
    <property type="match status" value="1"/>
</dbReference>
<dbReference type="Gene3D" id="3.30.1490.10">
    <property type="match status" value="1"/>
</dbReference>
<dbReference type="HAMAP" id="MF_01302_B">
    <property type="entry name" value="Ribosomal_uS8_B"/>
    <property type="match status" value="1"/>
</dbReference>
<dbReference type="InterPro" id="IPR000630">
    <property type="entry name" value="Ribosomal_uS8"/>
</dbReference>
<dbReference type="InterPro" id="IPR047863">
    <property type="entry name" value="Ribosomal_uS8_CS"/>
</dbReference>
<dbReference type="InterPro" id="IPR035987">
    <property type="entry name" value="Ribosomal_uS8_sf"/>
</dbReference>
<dbReference type="NCBIfam" id="NF001109">
    <property type="entry name" value="PRK00136.1"/>
    <property type="match status" value="1"/>
</dbReference>
<dbReference type="PANTHER" id="PTHR11758">
    <property type="entry name" value="40S RIBOSOMAL PROTEIN S15A"/>
    <property type="match status" value="1"/>
</dbReference>
<dbReference type="Pfam" id="PF00410">
    <property type="entry name" value="Ribosomal_S8"/>
    <property type="match status" value="1"/>
</dbReference>
<dbReference type="SUPFAM" id="SSF56047">
    <property type="entry name" value="Ribosomal protein S8"/>
    <property type="match status" value="1"/>
</dbReference>
<dbReference type="PROSITE" id="PS00053">
    <property type="entry name" value="RIBOSOMAL_S8"/>
    <property type="match status" value="1"/>
</dbReference>
<protein>
    <recommendedName>
        <fullName evidence="1">Small ribosomal subunit protein uS8</fullName>
    </recommendedName>
    <alternativeName>
        <fullName evidence="2">30S ribosomal protein S8</fullName>
    </alternativeName>
</protein>
<evidence type="ECO:0000255" key="1">
    <source>
        <dbReference type="HAMAP-Rule" id="MF_01302"/>
    </source>
</evidence>
<evidence type="ECO:0000305" key="2"/>